<dbReference type="EC" id="7.1.1.2" evidence="1"/>
<dbReference type="EMBL" id="D38114">
    <property type="protein sequence ID" value="BAA85278.1"/>
    <property type="molecule type" value="Genomic_DNA"/>
</dbReference>
<dbReference type="PIR" id="B59153">
    <property type="entry name" value="B59153"/>
</dbReference>
<dbReference type="RefSeq" id="NP_008213.1">
    <property type="nucleotide sequence ID" value="NC_001645.1"/>
</dbReference>
<dbReference type="SMR" id="Q9T9Y9"/>
<dbReference type="FunCoup" id="Q9T9Y9">
    <property type="interactions" value="265"/>
</dbReference>
<dbReference type="STRING" id="9593.ENSGGOP00000023225"/>
<dbReference type="GeneID" id="807892"/>
<dbReference type="CTD" id="4536"/>
<dbReference type="eggNOG" id="KOG4668">
    <property type="taxonomic scope" value="Eukaryota"/>
</dbReference>
<dbReference type="InParanoid" id="Q9T9Y9"/>
<dbReference type="Proteomes" id="UP000001519">
    <property type="component" value="Mitochondrion"/>
</dbReference>
<dbReference type="GO" id="GO:0005743">
    <property type="term" value="C:mitochondrial inner membrane"/>
    <property type="evidence" value="ECO:0000250"/>
    <property type="project" value="UniProtKB"/>
</dbReference>
<dbReference type="GO" id="GO:0045271">
    <property type="term" value="C:respiratory chain complex I"/>
    <property type="evidence" value="ECO:0000318"/>
    <property type="project" value="GO_Central"/>
</dbReference>
<dbReference type="GO" id="GO:0008137">
    <property type="term" value="F:NADH dehydrogenase (ubiquinone) activity"/>
    <property type="evidence" value="ECO:0000250"/>
    <property type="project" value="UniProtKB"/>
</dbReference>
<dbReference type="GO" id="GO:0006120">
    <property type="term" value="P:mitochondrial electron transport, NADH to ubiquinone"/>
    <property type="evidence" value="ECO:0000250"/>
    <property type="project" value="UniProtKB"/>
</dbReference>
<dbReference type="GO" id="GO:0032981">
    <property type="term" value="P:mitochondrial respiratory chain complex I assembly"/>
    <property type="evidence" value="ECO:0000250"/>
    <property type="project" value="UniProtKB"/>
</dbReference>
<dbReference type="InterPro" id="IPR050175">
    <property type="entry name" value="Complex_I_Subunit_2"/>
</dbReference>
<dbReference type="InterPro" id="IPR010933">
    <property type="entry name" value="NADH_DH_su2_C"/>
</dbReference>
<dbReference type="InterPro" id="IPR003917">
    <property type="entry name" value="NADH_UbQ_OxRdtase_chain2"/>
</dbReference>
<dbReference type="InterPro" id="IPR001750">
    <property type="entry name" value="ND/Mrp_TM"/>
</dbReference>
<dbReference type="PANTHER" id="PTHR46552">
    <property type="entry name" value="NADH-UBIQUINONE OXIDOREDUCTASE CHAIN 2"/>
    <property type="match status" value="1"/>
</dbReference>
<dbReference type="PANTHER" id="PTHR46552:SF1">
    <property type="entry name" value="NADH-UBIQUINONE OXIDOREDUCTASE CHAIN 2"/>
    <property type="match status" value="1"/>
</dbReference>
<dbReference type="Pfam" id="PF06444">
    <property type="entry name" value="NADH_dehy_S2_C"/>
    <property type="match status" value="1"/>
</dbReference>
<dbReference type="Pfam" id="PF00361">
    <property type="entry name" value="Proton_antipo_M"/>
    <property type="match status" value="1"/>
</dbReference>
<dbReference type="PRINTS" id="PR01436">
    <property type="entry name" value="NADHDHGNASE2"/>
</dbReference>
<protein>
    <recommendedName>
        <fullName evidence="1">NADH-ubiquinone oxidoreductase chain 2</fullName>
        <ecNumber evidence="1">7.1.1.2</ecNumber>
    </recommendedName>
    <alternativeName>
        <fullName>NADH dehydrogenase subunit 2</fullName>
    </alternativeName>
</protein>
<proteinExistence type="inferred from homology"/>
<comment type="function">
    <text evidence="1">Core subunit of the mitochondrial membrane respiratory chain NADH dehydrogenase (Complex I) which catalyzes electron transfer from NADH through the respiratory chain, using ubiquinone as an electron acceptor. Essential for the catalytic activity and assembly of complex I.</text>
</comment>
<comment type="catalytic activity">
    <reaction evidence="1">
        <text>a ubiquinone + NADH + 5 H(+)(in) = a ubiquinol + NAD(+) + 4 H(+)(out)</text>
        <dbReference type="Rhea" id="RHEA:29091"/>
        <dbReference type="Rhea" id="RHEA-COMP:9565"/>
        <dbReference type="Rhea" id="RHEA-COMP:9566"/>
        <dbReference type="ChEBI" id="CHEBI:15378"/>
        <dbReference type="ChEBI" id="CHEBI:16389"/>
        <dbReference type="ChEBI" id="CHEBI:17976"/>
        <dbReference type="ChEBI" id="CHEBI:57540"/>
        <dbReference type="ChEBI" id="CHEBI:57945"/>
        <dbReference type="EC" id="7.1.1.2"/>
    </reaction>
</comment>
<comment type="subunit">
    <text evidence="1 2">Core subunit of respiratory chain NADH dehydrogenase (Complex I) which is composed of 45 different subunits. Interacts with TMEM242 (By similarity).</text>
</comment>
<comment type="subcellular location">
    <subcellularLocation>
        <location evidence="2">Mitochondrion inner membrane</location>
        <topology evidence="3">Multi-pass membrane protein</topology>
    </subcellularLocation>
</comment>
<comment type="similarity">
    <text evidence="4">Belongs to the complex I subunit 2 family.</text>
</comment>
<sequence length="347" mass="38818">MNPLAQPIIYSTIFAGTLITALSSHWFFAWVGLEMNMLAFIPVLTKKMNPRSTEAAIKYFLTQATASMILLMAILSNNMLSGQWTTTNATNQYSSLMIVVAMAMKLGMAPFHFWVPEVTQGTPLMSGLLLLTWQKLAPMSIMYQISSSTNVSLLLTLSILSILAGSWGGLNQTQLRKILAYSSITHVGWMMAVLPYNPNMTILNLTIYIILTTTTFLLLNLSSSTTTLLLSRTWNKLTWLTPLIPSTLLSLGGLPPLTGFLPKWLIIEEFTKNNDLITPTIMAIITLLNLYFYLRLIYSTSITLLPMSNNVKMKWQLEYTKPTPFLPTLITLTTLLLPISPFMLMVL</sequence>
<name>NU2M_GORGO</name>
<gene>
    <name evidence="1" type="primary">MT-ND2</name>
    <name type="synonym">MTND2</name>
    <name type="synonym">NADH2</name>
    <name type="synonym">ND2</name>
</gene>
<keyword id="KW-0249">Electron transport</keyword>
<keyword id="KW-0472">Membrane</keyword>
<keyword id="KW-0496">Mitochondrion</keyword>
<keyword id="KW-0999">Mitochondrion inner membrane</keyword>
<keyword id="KW-0520">NAD</keyword>
<keyword id="KW-1185">Reference proteome</keyword>
<keyword id="KW-0679">Respiratory chain</keyword>
<keyword id="KW-1278">Translocase</keyword>
<keyword id="KW-0812">Transmembrane</keyword>
<keyword id="KW-1133">Transmembrane helix</keyword>
<keyword id="KW-0813">Transport</keyword>
<keyword id="KW-0830">Ubiquinone</keyword>
<reference key="1">
    <citation type="journal article" date="1995" name="Proc. Natl. Acad. Sci. U.S.A.">
        <title>Recent African origin of modern humans revealed by complete sequences of hominoid mitochondrial DNAs.</title>
        <authorList>
            <person name="Horai S."/>
            <person name="Hayasaka K."/>
            <person name="Kondo R."/>
            <person name="Tsugane K."/>
            <person name="Takahata N."/>
        </authorList>
    </citation>
    <scope>NUCLEOTIDE SEQUENCE [GENOMIC DNA]</scope>
</reference>
<evidence type="ECO:0000250" key="1">
    <source>
        <dbReference type="UniProtKB" id="P03891"/>
    </source>
</evidence>
<evidence type="ECO:0000250" key="2">
    <source>
        <dbReference type="UniProtKB" id="P03892"/>
    </source>
</evidence>
<evidence type="ECO:0000255" key="3"/>
<evidence type="ECO:0000305" key="4"/>
<organism>
    <name type="scientific">Gorilla gorilla gorilla</name>
    <name type="common">Western lowland gorilla</name>
    <dbReference type="NCBI Taxonomy" id="9595"/>
    <lineage>
        <taxon>Eukaryota</taxon>
        <taxon>Metazoa</taxon>
        <taxon>Chordata</taxon>
        <taxon>Craniata</taxon>
        <taxon>Vertebrata</taxon>
        <taxon>Euteleostomi</taxon>
        <taxon>Mammalia</taxon>
        <taxon>Eutheria</taxon>
        <taxon>Euarchontoglires</taxon>
        <taxon>Primates</taxon>
        <taxon>Haplorrhini</taxon>
        <taxon>Catarrhini</taxon>
        <taxon>Hominidae</taxon>
        <taxon>Gorilla</taxon>
    </lineage>
</organism>
<accession>Q9T9Y9</accession>
<geneLocation type="mitochondrion"/>
<feature type="chain" id="PRO_0000117590" description="NADH-ubiquinone oxidoreductase chain 2">
    <location>
        <begin position="1"/>
        <end position="347"/>
    </location>
</feature>
<feature type="transmembrane region" description="Helical" evidence="3">
    <location>
        <begin position="13"/>
        <end position="33"/>
    </location>
</feature>
<feature type="transmembrane region" description="Helical" evidence="3">
    <location>
        <begin position="55"/>
        <end position="75"/>
    </location>
</feature>
<feature type="transmembrane region" description="Helical" evidence="3">
    <location>
        <begin position="96"/>
        <end position="116"/>
    </location>
</feature>
<feature type="transmembrane region" description="Helical" evidence="3">
    <location>
        <begin position="123"/>
        <end position="143"/>
    </location>
</feature>
<feature type="transmembrane region" description="Helical" evidence="3">
    <location>
        <begin position="150"/>
        <end position="170"/>
    </location>
</feature>
<feature type="transmembrane region" description="Helical" evidence="3">
    <location>
        <begin position="178"/>
        <end position="198"/>
    </location>
</feature>
<feature type="transmembrane region" description="Helical" evidence="3">
    <location>
        <begin position="201"/>
        <end position="221"/>
    </location>
</feature>
<feature type="transmembrane region" description="Helical" evidence="3">
    <location>
        <begin position="247"/>
        <end position="267"/>
    </location>
</feature>
<feature type="transmembrane region" description="Helical" evidence="3">
    <location>
        <begin position="277"/>
        <end position="297"/>
    </location>
</feature>
<feature type="transmembrane region" description="Helical" evidence="3">
    <location>
        <begin position="325"/>
        <end position="345"/>
    </location>
</feature>